<organism>
    <name type="scientific">Streptococcus thermophilus (strain ATCC BAA-491 / LMD-9)</name>
    <dbReference type="NCBI Taxonomy" id="322159"/>
    <lineage>
        <taxon>Bacteria</taxon>
        <taxon>Bacillati</taxon>
        <taxon>Bacillota</taxon>
        <taxon>Bacilli</taxon>
        <taxon>Lactobacillales</taxon>
        <taxon>Streptococcaceae</taxon>
        <taxon>Streptococcus</taxon>
    </lineage>
</organism>
<comment type="catalytic activity">
    <reaction evidence="1">
        <text>2-formamido-N(1)-(5-O-phospho-beta-D-ribosyl)acetamidine + ATP = 5-amino-1-(5-phospho-beta-D-ribosyl)imidazole + ADP + phosphate + H(+)</text>
        <dbReference type="Rhea" id="RHEA:23032"/>
        <dbReference type="ChEBI" id="CHEBI:15378"/>
        <dbReference type="ChEBI" id="CHEBI:30616"/>
        <dbReference type="ChEBI" id="CHEBI:43474"/>
        <dbReference type="ChEBI" id="CHEBI:137981"/>
        <dbReference type="ChEBI" id="CHEBI:147287"/>
        <dbReference type="ChEBI" id="CHEBI:456216"/>
        <dbReference type="EC" id="6.3.3.1"/>
    </reaction>
</comment>
<comment type="pathway">
    <text evidence="1">Purine metabolism; IMP biosynthesis via de novo pathway; 5-amino-1-(5-phospho-D-ribosyl)imidazole from N(2)-formyl-N(1)-(5-phospho-D-ribosyl)glycinamide: step 2/2.</text>
</comment>
<comment type="subcellular location">
    <subcellularLocation>
        <location evidence="1">Cytoplasm</location>
    </subcellularLocation>
</comment>
<comment type="similarity">
    <text evidence="1">Belongs to the AIR synthase family.</text>
</comment>
<sequence>MSKNAYAQSGVDVEAGYEVVERIKKHVARTERAGVMGGLGGFGGMFDLSKTGVKEPVLISGTDGVGTKLMLAIKYDKHDTIGQDCVAMCVNDIIAAGAEPLYFLDYVATGKNEPAKLEQVVAGVAEGCVQSGVALIGGETAEMPGMYGEDDYDLAGFAVGVAEKSQIIDGSKVAEGDVLLGLASSGIHSNGYSLVRRVFADYTGEEVLPELEGQKLKDVLLEPTRIYVKAALPLIKEELVNGIAHITGGGFIENVPRMFSDDLAAEIDESKVPVLPIFKALEKYGEIKHEEMFEIFNMGIGLMFAVKPENVERVKELLDEPVYEIGRIVKKDGASVVIK</sequence>
<dbReference type="EC" id="6.3.3.1" evidence="1"/>
<dbReference type="EMBL" id="CP000419">
    <property type="protein sequence ID" value="ABJ65424.1"/>
    <property type="molecule type" value="Genomic_DNA"/>
</dbReference>
<dbReference type="SMR" id="Q03MZ8"/>
<dbReference type="KEGG" id="ste:STER_0052"/>
<dbReference type="HOGENOM" id="CLU_047116_0_0_9"/>
<dbReference type="UniPathway" id="UPA00074">
    <property type="reaction ID" value="UER00129"/>
</dbReference>
<dbReference type="GO" id="GO:0005829">
    <property type="term" value="C:cytosol"/>
    <property type="evidence" value="ECO:0007669"/>
    <property type="project" value="TreeGrafter"/>
</dbReference>
<dbReference type="GO" id="GO:0005524">
    <property type="term" value="F:ATP binding"/>
    <property type="evidence" value="ECO:0007669"/>
    <property type="project" value="UniProtKB-KW"/>
</dbReference>
<dbReference type="GO" id="GO:0004637">
    <property type="term" value="F:phosphoribosylamine-glycine ligase activity"/>
    <property type="evidence" value="ECO:0007669"/>
    <property type="project" value="TreeGrafter"/>
</dbReference>
<dbReference type="GO" id="GO:0004641">
    <property type="term" value="F:phosphoribosylformylglycinamidine cyclo-ligase activity"/>
    <property type="evidence" value="ECO:0007669"/>
    <property type="project" value="UniProtKB-UniRule"/>
</dbReference>
<dbReference type="GO" id="GO:0006189">
    <property type="term" value="P:'de novo' IMP biosynthetic process"/>
    <property type="evidence" value="ECO:0007669"/>
    <property type="project" value="UniProtKB-UniRule"/>
</dbReference>
<dbReference type="GO" id="GO:0046084">
    <property type="term" value="P:adenine biosynthetic process"/>
    <property type="evidence" value="ECO:0007669"/>
    <property type="project" value="TreeGrafter"/>
</dbReference>
<dbReference type="CDD" id="cd02196">
    <property type="entry name" value="PurM"/>
    <property type="match status" value="1"/>
</dbReference>
<dbReference type="FunFam" id="3.30.1330.10:FF:000001">
    <property type="entry name" value="Phosphoribosylformylglycinamidine cyclo-ligase"/>
    <property type="match status" value="1"/>
</dbReference>
<dbReference type="FunFam" id="3.90.650.10:FF:000011">
    <property type="entry name" value="Phosphoribosylformylglycinamidine cyclo-ligase"/>
    <property type="match status" value="1"/>
</dbReference>
<dbReference type="Gene3D" id="3.90.650.10">
    <property type="entry name" value="PurM-like C-terminal domain"/>
    <property type="match status" value="1"/>
</dbReference>
<dbReference type="Gene3D" id="3.30.1330.10">
    <property type="entry name" value="PurM-like, N-terminal domain"/>
    <property type="match status" value="1"/>
</dbReference>
<dbReference type="HAMAP" id="MF_00741">
    <property type="entry name" value="AIRS"/>
    <property type="match status" value="1"/>
</dbReference>
<dbReference type="InterPro" id="IPR010918">
    <property type="entry name" value="PurM-like_C_dom"/>
</dbReference>
<dbReference type="InterPro" id="IPR036676">
    <property type="entry name" value="PurM-like_C_sf"/>
</dbReference>
<dbReference type="InterPro" id="IPR016188">
    <property type="entry name" value="PurM-like_N"/>
</dbReference>
<dbReference type="InterPro" id="IPR036921">
    <property type="entry name" value="PurM-like_N_sf"/>
</dbReference>
<dbReference type="InterPro" id="IPR004733">
    <property type="entry name" value="PurM_cligase"/>
</dbReference>
<dbReference type="NCBIfam" id="TIGR00878">
    <property type="entry name" value="purM"/>
    <property type="match status" value="1"/>
</dbReference>
<dbReference type="PANTHER" id="PTHR10520:SF12">
    <property type="entry name" value="TRIFUNCTIONAL PURINE BIOSYNTHETIC PROTEIN ADENOSINE-3"/>
    <property type="match status" value="1"/>
</dbReference>
<dbReference type="PANTHER" id="PTHR10520">
    <property type="entry name" value="TRIFUNCTIONAL PURINE BIOSYNTHETIC PROTEIN ADENOSINE-3-RELATED"/>
    <property type="match status" value="1"/>
</dbReference>
<dbReference type="Pfam" id="PF00586">
    <property type="entry name" value="AIRS"/>
    <property type="match status" value="1"/>
</dbReference>
<dbReference type="Pfam" id="PF02769">
    <property type="entry name" value="AIRS_C"/>
    <property type="match status" value="1"/>
</dbReference>
<dbReference type="SUPFAM" id="SSF56042">
    <property type="entry name" value="PurM C-terminal domain-like"/>
    <property type="match status" value="1"/>
</dbReference>
<dbReference type="SUPFAM" id="SSF55326">
    <property type="entry name" value="PurM N-terminal domain-like"/>
    <property type="match status" value="1"/>
</dbReference>
<gene>
    <name evidence="1" type="primary">purM</name>
    <name type="ordered locus">STER_0052</name>
</gene>
<feature type="chain" id="PRO_1000046478" description="Phosphoribosylformylglycinamidine cyclo-ligase">
    <location>
        <begin position="1"/>
        <end position="339"/>
    </location>
</feature>
<evidence type="ECO:0000255" key="1">
    <source>
        <dbReference type="HAMAP-Rule" id="MF_00741"/>
    </source>
</evidence>
<accession>Q03MZ8</accession>
<reference key="1">
    <citation type="journal article" date="2006" name="Proc. Natl. Acad. Sci. U.S.A.">
        <title>Comparative genomics of the lactic acid bacteria.</title>
        <authorList>
            <person name="Makarova K.S."/>
            <person name="Slesarev A."/>
            <person name="Wolf Y.I."/>
            <person name="Sorokin A."/>
            <person name="Mirkin B."/>
            <person name="Koonin E.V."/>
            <person name="Pavlov A."/>
            <person name="Pavlova N."/>
            <person name="Karamychev V."/>
            <person name="Polouchine N."/>
            <person name="Shakhova V."/>
            <person name="Grigoriev I."/>
            <person name="Lou Y."/>
            <person name="Rohksar D."/>
            <person name="Lucas S."/>
            <person name="Huang K."/>
            <person name="Goodstein D.M."/>
            <person name="Hawkins T."/>
            <person name="Plengvidhya V."/>
            <person name="Welker D."/>
            <person name="Hughes J."/>
            <person name="Goh Y."/>
            <person name="Benson A."/>
            <person name="Baldwin K."/>
            <person name="Lee J.-H."/>
            <person name="Diaz-Muniz I."/>
            <person name="Dosti B."/>
            <person name="Smeianov V."/>
            <person name="Wechter W."/>
            <person name="Barabote R."/>
            <person name="Lorca G."/>
            <person name="Altermann E."/>
            <person name="Barrangou R."/>
            <person name="Ganesan B."/>
            <person name="Xie Y."/>
            <person name="Rawsthorne H."/>
            <person name="Tamir D."/>
            <person name="Parker C."/>
            <person name="Breidt F."/>
            <person name="Broadbent J.R."/>
            <person name="Hutkins R."/>
            <person name="O'Sullivan D."/>
            <person name="Steele J."/>
            <person name="Unlu G."/>
            <person name="Saier M.H. Jr."/>
            <person name="Klaenhammer T."/>
            <person name="Richardson P."/>
            <person name="Kozyavkin S."/>
            <person name="Weimer B.C."/>
            <person name="Mills D.A."/>
        </authorList>
    </citation>
    <scope>NUCLEOTIDE SEQUENCE [LARGE SCALE GENOMIC DNA]</scope>
    <source>
        <strain>ATCC BAA-491 / LMD-9</strain>
    </source>
</reference>
<name>PUR5_STRTD</name>
<proteinExistence type="inferred from homology"/>
<protein>
    <recommendedName>
        <fullName evidence="1">Phosphoribosylformylglycinamidine cyclo-ligase</fullName>
        <ecNumber evidence="1">6.3.3.1</ecNumber>
    </recommendedName>
    <alternativeName>
        <fullName evidence="1">AIR synthase</fullName>
    </alternativeName>
    <alternativeName>
        <fullName evidence="1">AIRS</fullName>
    </alternativeName>
    <alternativeName>
        <fullName evidence="1">Phosphoribosyl-aminoimidazole synthetase</fullName>
    </alternativeName>
</protein>
<keyword id="KW-0067">ATP-binding</keyword>
<keyword id="KW-0963">Cytoplasm</keyword>
<keyword id="KW-0436">Ligase</keyword>
<keyword id="KW-0547">Nucleotide-binding</keyword>
<keyword id="KW-0658">Purine biosynthesis</keyword>